<comment type="function">
    <text>Fimbriae (also called pili), polar filaments radiating from the surface of the bacterium to a length of 0.5-1.5 micrometers and numbering 100-300 per cell, enable bacteria to colonize the epithelium of specific host organs.</text>
</comment>
<comment type="subcellular location">
    <subcellularLocation>
        <location>Fimbrium</location>
    </subcellularLocation>
</comment>
<comment type="similarity">
    <text evidence="2">Belongs to the fimbrial protein family.</text>
</comment>
<keyword id="KW-1015">Disulfide bond</keyword>
<keyword id="KW-0281">Fimbrium</keyword>
<keyword id="KW-0732">Signal</keyword>
<reference key="1">
    <citation type="journal article" date="1993" name="FEMS Microbiol. Lett.">
        <title>Analysis of the Salmonella fim gene cluster: identification of a new gene (fimI) encoding a fimbrin-like protein and located downstream from the fimA gene.</title>
        <authorList>
            <person name="Rossolini G.M."/>
            <person name="Muscas P."/>
            <person name="Chiesurin A."/>
            <person name="Satta G."/>
        </authorList>
    </citation>
    <scope>NUCLEOTIDE SEQUENCE [GENOMIC DNA]</scope>
    <source>
        <strain>STY4</strain>
    </source>
</reference>
<reference key="2">
    <citation type="journal article" date="2001" name="Nature">
        <title>Complete genome sequence of a multiple drug resistant Salmonella enterica serovar Typhi CT18.</title>
        <authorList>
            <person name="Parkhill J."/>
            <person name="Dougan G."/>
            <person name="James K.D."/>
            <person name="Thomson N.R."/>
            <person name="Pickard D."/>
            <person name="Wain J."/>
            <person name="Churcher C.M."/>
            <person name="Mungall K.L."/>
            <person name="Bentley S.D."/>
            <person name="Holden M.T.G."/>
            <person name="Sebaihia M."/>
            <person name="Baker S."/>
            <person name="Basham D."/>
            <person name="Brooks K."/>
            <person name="Chillingworth T."/>
            <person name="Connerton P."/>
            <person name="Cronin A."/>
            <person name="Davis P."/>
            <person name="Davies R.M."/>
            <person name="Dowd L."/>
            <person name="White N."/>
            <person name="Farrar J."/>
            <person name="Feltwell T."/>
            <person name="Hamlin N."/>
            <person name="Haque A."/>
            <person name="Hien T.T."/>
            <person name="Holroyd S."/>
            <person name="Jagels K."/>
            <person name="Krogh A."/>
            <person name="Larsen T.S."/>
            <person name="Leather S."/>
            <person name="Moule S."/>
            <person name="O'Gaora P."/>
            <person name="Parry C."/>
            <person name="Quail M.A."/>
            <person name="Rutherford K.M."/>
            <person name="Simmonds M."/>
            <person name="Skelton J."/>
            <person name="Stevens K."/>
            <person name="Whitehead S."/>
            <person name="Barrell B.G."/>
        </authorList>
    </citation>
    <scope>NUCLEOTIDE SEQUENCE [LARGE SCALE GENOMIC DNA]</scope>
    <source>
        <strain>CT18</strain>
    </source>
</reference>
<reference key="3">
    <citation type="journal article" date="2003" name="J. Bacteriol.">
        <title>Comparative genomics of Salmonella enterica serovar Typhi strains Ty2 and CT18.</title>
        <authorList>
            <person name="Deng W."/>
            <person name="Liou S.-R."/>
            <person name="Plunkett G. III"/>
            <person name="Mayhew G.F."/>
            <person name="Rose D.J."/>
            <person name="Burland V."/>
            <person name="Kodoyianni V."/>
            <person name="Schwartz D.C."/>
            <person name="Blattner F.R."/>
        </authorList>
    </citation>
    <scope>NUCLEOTIDE SEQUENCE [LARGE SCALE GENOMIC DNA]</scope>
    <source>
        <strain>ATCC 700931 / Ty2</strain>
    </source>
</reference>
<proteinExistence type="inferred from homology"/>
<dbReference type="EMBL" id="X65168">
    <property type="protein sequence ID" value="CAA46286.1"/>
    <property type="molecule type" value="Genomic_DNA"/>
</dbReference>
<dbReference type="EMBL" id="AL513382">
    <property type="protein sequence ID" value="CAD05025.1"/>
    <property type="molecule type" value="Genomic_DNA"/>
</dbReference>
<dbReference type="EMBL" id="AE014613">
    <property type="protein sequence ID" value="AAO69914.1"/>
    <property type="molecule type" value="Genomic_DNA"/>
</dbReference>
<dbReference type="PIR" id="S20682">
    <property type="entry name" value="S20682"/>
</dbReference>
<dbReference type="RefSeq" id="NP_455133.1">
    <property type="nucleotide sequence ID" value="NC_003198.1"/>
</dbReference>
<dbReference type="RefSeq" id="WP_000681037.1">
    <property type="nucleotide sequence ID" value="NZ_WSUR01000008.1"/>
</dbReference>
<dbReference type="SMR" id="P37920"/>
<dbReference type="STRING" id="220341.gene:17584605"/>
<dbReference type="KEGG" id="stt:t2320"/>
<dbReference type="KEGG" id="sty:STY0589"/>
<dbReference type="PATRIC" id="fig|220341.7.peg.592"/>
<dbReference type="eggNOG" id="COG3539">
    <property type="taxonomic scope" value="Bacteria"/>
</dbReference>
<dbReference type="HOGENOM" id="CLU_088965_0_0_6"/>
<dbReference type="OMA" id="ATFVMKY"/>
<dbReference type="OrthoDB" id="8586454at2"/>
<dbReference type="Proteomes" id="UP000000541">
    <property type="component" value="Chromosome"/>
</dbReference>
<dbReference type="Proteomes" id="UP000002670">
    <property type="component" value="Chromosome"/>
</dbReference>
<dbReference type="GO" id="GO:0009289">
    <property type="term" value="C:pilus"/>
    <property type="evidence" value="ECO:0007669"/>
    <property type="project" value="UniProtKB-SubCell"/>
</dbReference>
<dbReference type="GO" id="GO:0043709">
    <property type="term" value="P:cell adhesion involved in single-species biofilm formation"/>
    <property type="evidence" value="ECO:0007669"/>
    <property type="project" value="TreeGrafter"/>
</dbReference>
<dbReference type="FunFam" id="2.60.40.1090:FF:000001">
    <property type="entry name" value="Type-1 fimbrial major subunit"/>
    <property type="match status" value="1"/>
</dbReference>
<dbReference type="Gene3D" id="2.60.40.1090">
    <property type="entry name" value="Fimbrial-type adhesion domain"/>
    <property type="match status" value="1"/>
</dbReference>
<dbReference type="InterPro" id="IPR000259">
    <property type="entry name" value="Adhesion_dom_fimbrial"/>
</dbReference>
<dbReference type="InterPro" id="IPR036937">
    <property type="entry name" value="Adhesion_dom_fimbrial_sf"/>
</dbReference>
<dbReference type="InterPro" id="IPR008966">
    <property type="entry name" value="Adhesion_dom_sf"/>
</dbReference>
<dbReference type="InterPro" id="IPR050263">
    <property type="entry name" value="Bact_Fimbrial_Adh_Pro"/>
</dbReference>
<dbReference type="NCBIfam" id="NF011741">
    <property type="entry name" value="PRK15194.1"/>
    <property type="match status" value="1"/>
</dbReference>
<dbReference type="PANTHER" id="PTHR33420">
    <property type="entry name" value="FIMBRIAL SUBUNIT ELFA-RELATED"/>
    <property type="match status" value="1"/>
</dbReference>
<dbReference type="PANTHER" id="PTHR33420:SF12">
    <property type="entry name" value="FIMBRIN-LIKE PROTEIN FIMI-RELATED"/>
    <property type="match status" value="1"/>
</dbReference>
<dbReference type="Pfam" id="PF00419">
    <property type="entry name" value="Fimbrial"/>
    <property type="match status" value="1"/>
</dbReference>
<dbReference type="SUPFAM" id="SSF49401">
    <property type="entry name" value="Bacterial adhesins"/>
    <property type="match status" value="1"/>
</dbReference>
<name>FIMA1_SALTI</name>
<sequence>MKHKLMTSTIASLMFVAGAAVAADPTPVSVSGGTIHFEGKLVYAACAVSTKSADQTVTLGQYRTASFTAIGDTTAQVPFSIVLNDCDPKVAATAAVAFSGQADNTNTNLLAVSSADNSTTATGVGIEILDNTSSPLKPDGATFSAKQALVEGTNTLRFTARYKATAAATPGQANADATFIMKYE</sequence>
<organism>
    <name type="scientific">Salmonella typhi</name>
    <dbReference type="NCBI Taxonomy" id="90370"/>
    <lineage>
        <taxon>Bacteria</taxon>
        <taxon>Pseudomonadati</taxon>
        <taxon>Pseudomonadota</taxon>
        <taxon>Gammaproteobacteria</taxon>
        <taxon>Enterobacterales</taxon>
        <taxon>Enterobacteriaceae</taxon>
        <taxon>Salmonella</taxon>
    </lineage>
</organism>
<evidence type="ECO:0000255" key="1"/>
<evidence type="ECO:0000305" key="2"/>
<feature type="signal peptide" evidence="1">
    <location>
        <begin position="1"/>
        <end position="22"/>
    </location>
</feature>
<feature type="chain" id="PRO_0000009171" description="Type-1 fimbrial protein, A chain">
    <location>
        <begin position="23"/>
        <end position="184"/>
    </location>
</feature>
<feature type="disulfide bond" evidence="2">
    <location>
        <begin position="46"/>
        <end position="86"/>
    </location>
</feature>
<gene>
    <name type="primary">fimA</name>
    <name type="ordered locus">STY0589</name>
    <name type="ordered locus">t2320</name>
</gene>
<accession>P37920</accession>
<protein>
    <recommendedName>
        <fullName>Type-1 fimbrial protein, A chain</fullName>
    </recommendedName>
    <alternativeName>
        <fullName>Type-1A pilin</fullName>
    </alternativeName>
</protein>